<sequence length="503" mass="55308">MWLDERLLALFRRNFQSTLTYWSVFFSFGLCIAFLGPTLLDLRCQTHSSLQDITWVFFAQQFCLLVGSTLGGVFKRTVKQSLFLLFLSSLTISVVFVIIPFCDHVGVLALVMAIAGLAMGCIDTISNMQLVKIYQQDSAIFLQVLHFFVGFGALLSPLIADPFLSDTNCIQSNATQNGSRNLEHIRNSLVPHHPRNVSHYVLPLQGALVTQVSYAFWIMAAINLPVPVAVFYLIYKKGMVPGCHIQNGGLLSADELAMEMHKENDSQKIEAHEEHGHAVSLLCCQNKKIWNAPFTFFAIHMCAAVTLFMTDGIVGEYSGFVYSYAVEQPLNLAHKTAGYLPSLFWAFITLGRLISIPVSYKMAPRSMLFINLIGVTATFLFLLLSQNSTTGMFVGTALLGLWLSSVFPSMLAYTEDILNYKGCATTVLVTGAGMGEMVLQILVGSVMQTQGSYSFLVCGICLSSLAFTLYAVLLVVDSLHNRASEDSACKPPGLDGEATSYQS</sequence>
<keyword id="KW-0472">Membrane</keyword>
<keyword id="KW-1185">Reference proteome</keyword>
<keyword id="KW-0812">Transmembrane</keyword>
<keyword id="KW-1133">Transmembrane helix</keyword>
<keyword id="KW-0813">Transport</keyword>
<proteinExistence type="evidence at transcript level"/>
<gene>
    <name type="primary">mfsd4a</name>
    <name type="synonym">mfsd4</name>
</gene>
<accession>Q5BIZ0</accession>
<name>MFD4A_XENTR</name>
<dbReference type="EMBL" id="BC091703">
    <property type="protein sequence ID" value="AAH91703.1"/>
    <property type="molecule type" value="mRNA"/>
</dbReference>
<dbReference type="RefSeq" id="NP_001025653.1">
    <property type="nucleotide sequence ID" value="NM_001030482.1"/>
</dbReference>
<dbReference type="FunCoup" id="Q5BIZ0">
    <property type="interactions" value="53"/>
</dbReference>
<dbReference type="PaxDb" id="8364-ENSXETP00000002145"/>
<dbReference type="DNASU" id="595041"/>
<dbReference type="GeneID" id="595041"/>
<dbReference type="KEGG" id="xtr:595041"/>
<dbReference type="AGR" id="Xenbase:XB-GENE-489846"/>
<dbReference type="CTD" id="148808"/>
<dbReference type="Xenbase" id="XB-GENE-489846">
    <property type="gene designation" value="mfsd4a"/>
</dbReference>
<dbReference type="eggNOG" id="ENOG502QRVK">
    <property type="taxonomic scope" value="Eukaryota"/>
</dbReference>
<dbReference type="HOGENOM" id="CLU_028923_0_0_1"/>
<dbReference type="InParanoid" id="Q5BIZ0"/>
<dbReference type="OMA" id="WRWDARV"/>
<dbReference type="OrthoDB" id="413079at2759"/>
<dbReference type="PhylomeDB" id="Q5BIZ0"/>
<dbReference type="TreeFam" id="TF314613"/>
<dbReference type="Proteomes" id="UP000008143">
    <property type="component" value="Chromosome 2"/>
</dbReference>
<dbReference type="Bgee" id="ENSXETG00000000985">
    <property type="expression patterns" value="Expressed in stomach and 7 other cell types or tissues"/>
</dbReference>
<dbReference type="GO" id="GO:0016020">
    <property type="term" value="C:membrane"/>
    <property type="evidence" value="ECO:0007669"/>
    <property type="project" value="UniProtKB-SubCell"/>
</dbReference>
<dbReference type="GO" id="GO:0022857">
    <property type="term" value="F:transmembrane transporter activity"/>
    <property type="evidence" value="ECO:0007669"/>
    <property type="project" value="InterPro"/>
</dbReference>
<dbReference type="CDD" id="cd17453">
    <property type="entry name" value="MFS_MFSD4A"/>
    <property type="match status" value="1"/>
</dbReference>
<dbReference type="FunFam" id="1.20.1250.20:FF:000200">
    <property type="entry name" value="Major facilitator superfamily domain-containing protein 4A"/>
    <property type="match status" value="1"/>
</dbReference>
<dbReference type="Gene3D" id="1.20.1250.20">
    <property type="entry name" value="MFS general substrate transporter like domains"/>
    <property type="match status" value="2"/>
</dbReference>
<dbReference type="InterPro" id="IPR011701">
    <property type="entry name" value="MFS"/>
</dbReference>
<dbReference type="InterPro" id="IPR036259">
    <property type="entry name" value="MFS_trans_sf"/>
</dbReference>
<dbReference type="PANTHER" id="PTHR23121:SF10">
    <property type="entry name" value="MAJOR FACILITATOR SUPERFAMILY DOMAIN-CONTAINING PROTEIN 4A"/>
    <property type="match status" value="1"/>
</dbReference>
<dbReference type="PANTHER" id="PTHR23121">
    <property type="entry name" value="SODIUM-DEPENDENT GLUCOSE TRANSPORTER 1"/>
    <property type="match status" value="1"/>
</dbReference>
<dbReference type="Pfam" id="PF07690">
    <property type="entry name" value="MFS_1"/>
    <property type="match status" value="1"/>
</dbReference>
<dbReference type="SUPFAM" id="SSF103473">
    <property type="entry name" value="MFS general substrate transporter"/>
    <property type="match status" value="1"/>
</dbReference>
<reference key="1">
    <citation type="submission" date="2005-03" db="EMBL/GenBank/DDBJ databases">
        <authorList>
            <consortium name="NIH - Xenopus Gene Collection (XGC) project"/>
        </authorList>
    </citation>
    <scope>NUCLEOTIDE SEQUENCE [LARGE SCALE MRNA]</scope>
</reference>
<organism>
    <name type="scientific">Xenopus tropicalis</name>
    <name type="common">Western clawed frog</name>
    <name type="synonym">Silurana tropicalis</name>
    <dbReference type="NCBI Taxonomy" id="8364"/>
    <lineage>
        <taxon>Eukaryota</taxon>
        <taxon>Metazoa</taxon>
        <taxon>Chordata</taxon>
        <taxon>Craniata</taxon>
        <taxon>Vertebrata</taxon>
        <taxon>Euteleostomi</taxon>
        <taxon>Amphibia</taxon>
        <taxon>Batrachia</taxon>
        <taxon>Anura</taxon>
        <taxon>Pipoidea</taxon>
        <taxon>Pipidae</taxon>
        <taxon>Xenopodinae</taxon>
        <taxon>Xenopus</taxon>
        <taxon>Silurana</taxon>
    </lineage>
</organism>
<comment type="subcellular location">
    <subcellularLocation>
        <location evidence="3">Membrane</location>
        <topology evidence="3">Multi-pass membrane protein</topology>
    </subcellularLocation>
</comment>
<comment type="similarity">
    <text evidence="3">Belongs to the major facilitator superfamily.</text>
</comment>
<feature type="chain" id="PRO_0000273399" description="Major facilitator superfamily domain-containing protein 4A">
    <location>
        <begin position="1"/>
        <end position="503"/>
    </location>
</feature>
<feature type="transmembrane region" description="Helical" evidence="1">
    <location>
        <begin position="19"/>
        <end position="39"/>
    </location>
</feature>
<feature type="transmembrane region" description="Helical" evidence="1">
    <location>
        <begin position="53"/>
        <end position="73"/>
    </location>
</feature>
<feature type="transmembrane region" description="Helical" evidence="1">
    <location>
        <begin position="82"/>
        <end position="102"/>
    </location>
</feature>
<feature type="transmembrane region" description="Helical" evidence="1">
    <location>
        <begin position="105"/>
        <end position="125"/>
    </location>
</feature>
<feature type="transmembrane region" description="Helical" evidence="1">
    <location>
        <begin position="139"/>
        <end position="159"/>
    </location>
</feature>
<feature type="transmembrane region" description="Helical" evidence="1">
    <location>
        <begin position="214"/>
        <end position="234"/>
    </location>
</feature>
<feature type="transmembrane region" description="Helical" evidence="1">
    <location>
        <begin position="289"/>
        <end position="309"/>
    </location>
</feature>
<feature type="transmembrane region" description="Helical" evidence="1">
    <location>
        <begin position="338"/>
        <end position="358"/>
    </location>
</feature>
<feature type="transmembrane region" description="Helical" evidence="1">
    <location>
        <begin position="366"/>
        <end position="386"/>
    </location>
</feature>
<feature type="transmembrane region" description="Helical" evidence="1">
    <location>
        <begin position="392"/>
        <end position="412"/>
    </location>
</feature>
<feature type="transmembrane region" description="Helical" evidence="1">
    <location>
        <begin position="427"/>
        <end position="447"/>
    </location>
</feature>
<feature type="transmembrane region" description="Helical" evidence="1">
    <location>
        <begin position="455"/>
        <end position="475"/>
    </location>
</feature>
<feature type="region of interest" description="Disordered" evidence="2">
    <location>
        <begin position="484"/>
        <end position="503"/>
    </location>
</feature>
<evidence type="ECO:0000255" key="1"/>
<evidence type="ECO:0000256" key="2">
    <source>
        <dbReference type="SAM" id="MobiDB-lite"/>
    </source>
</evidence>
<evidence type="ECO:0000305" key="3"/>
<protein>
    <recommendedName>
        <fullName>Major facilitator superfamily domain-containing protein 4A</fullName>
    </recommendedName>
    <alternativeName>
        <fullName>Major facilitator superfamily domain-containing protein 4</fullName>
    </alternativeName>
</protein>